<organism>
    <name type="scientific">Burkholderia cepacia</name>
    <name type="common">Pseudomonas cepacia</name>
    <dbReference type="NCBI Taxonomy" id="292"/>
    <lineage>
        <taxon>Bacteria</taxon>
        <taxon>Pseudomonadati</taxon>
        <taxon>Pseudomonadota</taxon>
        <taxon>Betaproteobacteria</taxon>
        <taxon>Burkholderiales</taxon>
        <taxon>Burkholderiaceae</taxon>
        <taxon>Burkholderia</taxon>
        <taxon>Burkholderia cepacia complex</taxon>
    </lineage>
</organism>
<reference key="1">
    <citation type="journal article" date="1991" name="Gene">
        <title>Nucleotide sequence of IS402 from Pseudomonas cepacia.</title>
        <authorList>
            <person name="Ferrante A.A."/>
            <person name="Lessie T.G."/>
        </authorList>
    </citation>
    <scope>NUCLEOTIDE SEQUENCE [GENOMIC DNA]</scope>
</reference>
<comment type="similarity">
    <text evidence="2">Belongs to the transposase 6 family.</text>
</comment>
<accession>P24537</accession>
<keyword id="KW-0814">Transposable element</keyword>
<feature type="chain" id="PRO_0000075525" description="Insertion element IS402 uncharacterized 16.2 kDa protein">
    <location>
        <begin position="1"/>
        <end position="147"/>
    </location>
</feature>
<feature type="region of interest" description="Disordered" evidence="1">
    <location>
        <begin position="106"/>
        <end position="147"/>
    </location>
</feature>
<feature type="compositionally biased region" description="Low complexity" evidence="1">
    <location>
        <begin position="129"/>
        <end position="147"/>
    </location>
</feature>
<name>YI22_BURCE</name>
<dbReference type="EMBL" id="M64065">
    <property type="status" value="NOT_ANNOTATED_CDS"/>
    <property type="molecule type" value="Genomic_DNA"/>
</dbReference>
<dbReference type="PIR" id="JQ1134">
    <property type="entry name" value="JQ1134"/>
</dbReference>
<dbReference type="InterPro" id="IPR025161">
    <property type="entry name" value="IS402-like_dom"/>
</dbReference>
<dbReference type="InterPro" id="IPR052909">
    <property type="entry name" value="Transposase_6_like"/>
</dbReference>
<dbReference type="PANTHER" id="PTHR46637:SF1">
    <property type="entry name" value="BLL5188 PROTEIN"/>
    <property type="match status" value="1"/>
</dbReference>
<dbReference type="PANTHER" id="PTHR46637">
    <property type="entry name" value="TIS1421-TRANSPOSASE PROTEIN A"/>
    <property type="match status" value="1"/>
</dbReference>
<dbReference type="Pfam" id="PF13340">
    <property type="entry name" value="DUF4096"/>
    <property type="match status" value="1"/>
</dbReference>
<proteinExistence type="inferred from homology"/>
<protein>
    <recommendedName>
        <fullName>Insertion element IS402 uncharacterized 16.2 kDa protein</fullName>
    </recommendedName>
</protein>
<evidence type="ECO:0000256" key="1">
    <source>
        <dbReference type="SAM" id="MobiDB-lite"/>
    </source>
</evidence>
<evidence type="ECO:0000305" key="2"/>
<sequence>MAKPIIDDELWTLIEPLLPPPKPRREKNPGRLPVSNRAALTGILFVLKTGLRWRDLPAEMGCGSGVTCWRRLRDWQAAGVWDRLHELLLAKLRAADQIDFSRAAVDSSSIRAVGAGQKLGQTPPIARDPVPSTTSSPTPTVRRSPRS</sequence>